<gene>
    <name evidence="2" type="primary">OBAP1B</name>
    <name evidence="4" type="ordered locus">At2g31985</name>
    <name evidence="5" type="ORF">F22D22</name>
</gene>
<reference key="1">
    <citation type="journal article" date="1999" name="Nature">
        <title>Sequence and analysis of chromosome 2 of the plant Arabidopsis thaliana.</title>
        <authorList>
            <person name="Lin X."/>
            <person name="Kaul S."/>
            <person name="Rounsley S.D."/>
            <person name="Shea T.P."/>
            <person name="Benito M.-I."/>
            <person name="Town C.D."/>
            <person name="Fujii C.Y."/>
            <person name="Mason T.M."/>
            <person name="Bowman C.L."/>
            <person name="Barnstead M.E."/>
            <person name="Feldblyum T.V."/>
            <person name="Buell C.R."/>
            <person name="Ketchum K.A."/>
            <person name="Lee J.J."/>
            <person name="Ronning C.M."/>
            <person name="Koo H.L."/>
            <person name="Moffat K.S."/>
            <person name="Cronin L.A."/>
            <person name="Shen M."/>
            <person name="Pai G."/>
            <person name="Van Aken S."/>
            <person name="Umayam L."/>
            <person name="Tallon L.J."/>
            <person name="Gill J.E."/>
            <person name="Adams M.D."/>
            <person name="Carrera A.J."/>
            <person name="Creasy T.H."/>
            <person name="Goodman H.M."/>
            <person name="Somerville C.R."/>
            <person name="Copenhaver G.P."/>
            <person name="Preuss D."/>
            <person name="Nierman W.C."/>
            <person name="White O."/>
            <person name="Eisen J.A."/>
            <person name="Salzberg S.L."/>
            <person name="Fraser C.M."/>
            <person name="Venter J.C."/>
        </authorList>
    </citation>
    <scope>NUCLEOTIDE SEQUENCE [LARGE SCALE GENOMIC DNA]</scope>
    <source>
        <strain>cv. Columbia</strain>
    </source>
</reference>
<reference key="2">
    <citation type="journal article" date="2017" name="Plant J.">
        <title>Araport11: a complete reannotation of the Arabidopsis thaliana reference genome.</title>
        <authorList>
            <person name="Cheng C.Y."/>
            <person name="Krishnakumar V."/>
            <person name="Chan A.P."/>
            <person name="Thibaud-Nissen F."/>
            <person name="Schobel S."/>
            <person name="Town C.D."/>
        </authorList>
    </citation>
    <scope>GENOME REANNOTATION</scope>
    <source>
        <strain>cv. Columbia</strain>
    </source>
</reference>
<reference key="3">
    <citation type="journal article" date="2002" name="Science">
        <title>Functional annotation of a full-length Arabidopsis cDNA collection.</title>
        <authorList>
            <person name="Seki M."/>
            <person name="Narusaka M."/>
            <person name="Kamiya A."/>
            <person name="Ishida J."/>
            <person name="Satou M."/>
            <person name="Sakurai T."/>
            <person name="Nakajima M."/>
            <person name="Enju A."/>
            <person name="Akiyama K."/>
            <person name="Oono Y."/>
            <person name="Muramatsu M."/>
            <person name="Hayashizaki Y."/>
            <person name="Kawai J."/>
            <person name="Carninci P."/>
            <person name="Itoh M."/>
            <person name="Ishii Y."/>
            <person name="Arakawa T."/>
            <person name="Shibata K."/>
            <person name="Shinagawa A."/>
            <person name="Shinozaki K."/>
        </authorList>
    </citation>
    <scope>NUCLEOTIDE SEQUENCE [LARGE SCALE MRNA]</scope>
    <source>
        <strain>cv. Columbia</strain>
    </source>
</reference>
<reference key="4">
    <citation type="journal article" date="2003" name="Science">
        <title>Empirical analysis of transcriptional activity in the Arabidopsis genome.</title>
        <authorList>
            <person name="Yamada K."/>
            <person name="Lim J."/>
            <person name="Dale J.M."/>
            <person name="Chen H."/>
            <person name="Shinn P."/>
            <person name="Palm C.J."/>
            <person name="Southwick A.M."/>
            <person name="Wu H.C."/>
            <person name="Kim C.J."/>
            <person name="Nguyen M."/>
            <person name="Pham P.K."/>
            <person name="Cheuk R.F."/>
            <person name="Karlin-Newmann G."/>
            <person name="Liu S.X."/>
            <person name="Lam B."/>
            <person name="Sakano H."/>
            <person name="Wu T."/>
            <person name="Yu G."/>
            <person name="Miranda M."/>
            <person name="Quach H.L."/>
            <person name="Tripp M."/>
            <person name="Chang C.H."/>
            <person name="Lee J.M."/>
            <person name="Toriumi M.J."/>
            <person name="Chan M.M."/>
            <person name="Tang C.C."/>
            <person name="Onodera C.S."/>
            <person name="Deng J.M."/>
            <person name="Akiyama K."/>
            <person name="Ansari Y."/>
            <person name="Arakawa T."/>
            <person name="Banh J."/>
            <person name="Banno F."/>
            <person name="Bowser L."/>
            <person name="Brooks S.Y."/>
            <person name="Carninci P."/>
            <person name="Chao Q."/>
            <person name="Choy N."/>
            <person name="Enju A."/>
            <person name="Goldsmith A.D."/>
            <person name="Gurjal M."/>
            <person name="Hansen N.F."/>
            <person name="Hayashizaki Y."/>
            <person name="Johnson-Hopson C."/>
            <person name="Hsuan V.W."/>
            <person name="Iida K."/>
            <person name="Karnes M."/>
            <person name="Khan S."/>
            <person name="Koesema E."/>
            <person name="Ishida J."/>
            <person name="Jiang P.X."/>
            <person name="Jones T."/>
            <person name="Kawai J."/>
            <person name="Kamiya A."/>
            <person name="Meyers C."/>
            <person name="Nakajima M."/>
            <person name="Narusaka M."/>
            <person name="Seki M."/>
            <person name="Sakurai T."/>
            <person name="Satou M."/>
            <person name="Tamse R."/>
            <person name="Vaysberg M."/>
            <person name="Wallender E.K."/>
            <person name="Wong C."/>
            <person name="Yamamura Y."/>
            <person name="Yuan S."/>
            <person name="Shinozaki K."/>
            <person name="Davis R.W."/>
            <person name="Theologis A."/>
            <person name="Ecker J.R."/>
        </authorList>
    </citation>
    <scope>NUCLEOTIDE SEQUENCE [LARGE SCALE MRNA]</scope>
    <source>
        <strain>cv. Columbia</strain>
    </source>
</reference>
<reference key="5">
    <citation type="journal article" date="2007" name="Mol. Cell. Proteomics">
        <title>Multidimensional protein identification technology (MudPIT) analysis of ubiquitinated proteins in plants.</title>
        <authorList>
            <person name="Maor R."/>
            <person name="Jones A."/>
            <person name="Nuehse T.S."/>
            <person name="Studholme D.J."/>
            <person name="Peck S.C."/>
            <person name="Shirasu K."/>
        </authorList>
    </citation>
    <scope>IDENTIFICATION BY MASS SPECTROMETRY [LARGE SCALE ANALYSIS]</scope>
    <source>
        <strain>cv. Landsberg erecta</strain>
    </source>
</reference>
<reference key="6">
    <citation type="journal article" date="2014" name="Plant Physiol.">
        <title>The evolutionary conserved oil body associated protein OBAP1 participates in the regulation of oil body size.</title>
        <authorList>
            <person name="Lopez-Ribera I."/>
            <person name="La Paz J.L."/>
            <person name="Repiso C."/>
            <person name="Garcia N."/>
            <person name="Miquel M."/>
            <person name="Hernandez M.L."/>
            <person name="Martinez-Rivas J.M."/>
            <person name="Vicient C.M."/>
        </authorList>
    </citation>
    <scope>GENE FAMILY</scope>
    <scope>NOMENCLATURE</scope>
</reference>
<keyword id="KW-1185">Reference proteome</keyword>
<evidence type="ECO:0000256" key="1">
    <source>
        <dbReference type="SAM" id="MobiDB-lite"/>
    </source>
</evidence>
<evidence type="ECO:0000303" key="2">
    <source>
    </source>
</evidence>
<evidence type="ECO:0000305" key="3"/>
<evidence type="ECO:0000312" key="4">
    <source>
        <dbReference type="Araport" id="AT2G31985"/>
    </source>
</evidence>
<evidence type="ECO:0000312" key="5">
    <source>
        <dbReference type="EMBL" id="AC006223"/>
    </source>
</evidence>
<evidence type="ECO:0000312" key="6">
    <source>
        <dbReference type="EMBL" id="BAC43279.1"/>
    </source>
</evidence>
<comment type="interaction">
    <interactant intactId="EBI-4425363">
        <id>Q8GWR2</id>
    </interactant>
    <interactant intactId="EBI-4425345">
        <id>Q9C7N3</id>
        <label>OBAP2C</label>
    </interactant>
    <organismsDiffer>false</organismsDiffer>
    <experiments>4</experiments>
</comment>
<comment type="similarity">
    <text evidence="3">Belongs to the OBAP family.</text>
</comment>
<dbReference type="EMBL" id="AC006223">
    <property type="status" value="NOT_ANNOTATED_CDS"/>
    <property type="molecule type" value="Genomic_DNA"/>
</dbReference>
<dbReference type="EMBL" id="CP002685">
    <property type="protein sequence ID" value="AEC08618.1"/>
    <property type="molecule type" value="Genomic_DNA"/>
</dbReference>
<dbReference type="EMBL" id="AK117989">
    <property type="protein sequence ID" value="BAC42624.1"/>
    <property type="molecule type" value="mRNA"/>
</dbReference>
<dbReference type="EMBL" id="AK118685">
    <property type="protein sequence ID" value="BAC43279.1"/>
    <property type="molecule type" value="mRNA"/>
</dbReference>
<dbReference type="EMBL" id="BT005262">
    <property type="protein sequence ID" value="AAO63326.1"/>
    <property type="molecule type" value="mRNA"/>
</dbReference>
<dbReference type="RefSeq" id="NP_850179.1">
    <property type="nucleotide sequence ID" value="NM_179848.1"/>
</dbReference>
<dbReference type="FunCoup" id="Q8GWR2">
    <property type="interactions" value="62"/>
</dbReference>
<dbReference type="IntAct" id="Q8GWR2">
    <property type="interactions" value="5"/>
</dbReference>
<dbReference type="STRING" id="3702.Q8GWR2"/>
<dbReference type="PaxDb" id="3702-AT2G31985.1"/>
<dbReference type="ProteomicsDB" id="239075"/>
<dbReference type="DNASU" id="817759"/>
<dbReference type="EnsemblPlants" id="AT2G31985.1">
    <property type="protein sequence ID" value="AT2G31985.1"/>
    <property type="gene ID" value="AT2G31985"/>
</dbReference>
<dbReference type="GeneID" id="817759"/>
<dbReference type="Gramene" id="AT2G31985.1">
    <property type="protein sequence ID" value="AT2G31985.1"/>
    <property type="gene ID" value="AT2G31985"/>
</dbReference>
<dbReference type="KEGG" id="ath:AT2G31985"/>
<dbReference type="Araport" id="AT2G31985"/>
<dbReference type="TAIR" id="AT2G31985"/>
<dbReference type="eggNOG" id="ENOG502QR3B">
    <property type="taxonomic scope" value="Eukaryota"/>
</dbReference>
<dbReference type="HOGENOM" id="CLU_071931_2_1_1"/>
<dbReference type="InParanoid" id="Q8GWR2"/>
<dbReference type="OMA" id="RHVEAHH"/>
<dbReference type="OrthoDB" id="1901244at2759"/>
<dbReference type="PhylomeDB" id="Q8GWR2"/>
<dbReference type="PRO" id="PR:Q8GWR2"/>
<dbReference type="Proteomes" id="UP000006548">
    <property type="component" value="Chromosome 2"/>
</dbReference>
<dbReference type="ExpressionAtlas" id="Q8GWR2">
    <property type="expression patterns" value="baseline and differential"/>
</dbReference>
<dbReference type="InterPro" id="IPR010686">
    <property type="entry name" value="OBAP-like"/>
</dbReference>
<dbReference type="PANTHER" id="PTHR31360">
    <property type="match status" value="1"/>
</dbReference>
<dbReference type="PANTHER" id="PTHR31360:SF0">
    <property type="entry name" value="OIL BODY-ASSOCIATED PROTEIN 1B"/>
    <property type="match status" value="1"/>
</dbReference>
<dbReference type="Pfam" id="PF06884">
    <property type="entry name" value="DUF1264"/>
    <property type="match status" value="1"/>
</dbReference>
<sequence length="241" mass="26759">MEKAVHSSTTSGPAVPGETTKTGTSIIDTAASAVQSFAPVNQIHQHLCAFHFYADDMARQVEAHHFCSHVNEEMRQCLIYDGPDANARLIGLEYIVSEKLFMTLPDEEKKLWHSHEWEVKGGFLFMPGVPGAIQRKDLDKVAKTYGKVFHFWQVDLGHELPIGLPNVMMAVTRDGQLFHEMIQEAEKRFGVSVEGERDSRAYMSGPELGIHPLANGGGKGMKLELREVDIKPVESVGSVFV</sequence>
<protein>
    <recommendedName>
        <fullName evidence="2">Oil body-associated protein 1B</fullName>
    </recommendedName>
</protein>
<name>OBP1B_ARATH</name>
<accession>Q8GWR2</accession>
<accession>Q8GXX2</accession>
<organism evidence="6">
    <name type="scientific">Arabidopsis thaliana</name>
    <name type="common">Mouse-ear cress</name>
    <dbReference type="NCBI Taxonomy" id="3702"/>
    <lineage>
        <taxon>Eukaryota</taxon>
        <taxon>Viridiplantae</taxon>
        <taxon>Streptophyta</taxon>
        <taxon>Embryophyta</taxon>
        <taxon>Tracheophyta</taxon>
        <taxon>Spermatophyta</taxon>
        <taxon>Magnoliopsida</taxon>
        <taxon>eudicotyledons</taxon>
        <taxon>Gunneridae</taxon>
        <taxon>Pentapetalae</taxon>
        <taxon>rosids</taxon>
        <taxon>malvids</taxon>
        <taxon>Brassicales</taxon>
        <taxon>Brassicaceae</taxon>
        <taxon>Camelineae</taxon>
        <taxon>Arabidopsis</taxon>
    </lineage>
</organism>
<feature type="chain" id="PRO_0000436087" description="Oil body-associated protein 1B">
    <location>
        <begin position="1"/>
        <end position="241"/>
    </location>
</feature>
<feature type="region of interest" description="Disordered" evidence="1">
    <location>
        <begin position="1"/>
        <end position="22"/>
    </location>
</feature>
<feature type="compositionally biased region" description="Polar residues" evidence="1">
    <location>
        <begin position="1"/>
        <end position="12"/>
    </location>
</feature>
<feature type="sequence conflict" description="In Ref. 3; BAC42624." evidence="3" ref="3">
    <original>D</original>
    <variation>G</variation>
    <location>
        <position position="28"/>
    </location>
</feature>
<proteinExistence type="evidence at protein level"/>